<accession>P44661</accession>
<reference key="1">
    <citation type="journal article" date="1995" name="Science">
        <title>Whole-genome random sequencing and assembly of Haemophilus influenzae Rd.</title>
        <authorList>
            <person name="Fleischmann R.D."/>
            <person name="Adams M.D."/>
            <person name="White O."/>
            <person name="Clayton R.A."/>
            <person name="Kirkness E.F."/>
            <person name="Kerlavage A.R."/>
            <person name="Bult C.J."/>
            <person name="Tomb J.-F."/>
            <person name="Dougherty B.A."/>
            <person name="Merrick J.M."/>
            <person name="McKenney K."/>
            <person name="Sutton G.G."/>
            <person name="FitzHugh W."/>
            <person name="Fields C.A."/>
            <person name="Gocayne J.D."/>
            <person name="Scott J.D."/>
            <person name="Shirley R."/>
            <person name="Liu L.-I."/>
            <person name="Glodek A."/>
            <person name="Kelley J.M."/>
            <person name="Weidman J.F."/>
            <person name="Phillips C.A."/>
            <person name="Spriggs T."/>
            <person name="Hedblom E."/>
            <person name="Cotton M.D."/>
            <person name="Utterback T.R."/>
            <person name="Hanna M.C."/>
            <person name="Nguyen D.T."/>
            <person name="Saudek D.M."/>
            <person name="Brandon R.C."/>
            <person name="Fine L.D."/>
            <person name="Fritchman J.L."/>
            <person name="Fuhrmann J.L."/>
            <person name="Geoghagen N.S.M."/>
            <person name="Gnehm C.L."/>
            <person name="McDonald L.A."/>
            <person name="Small K.V."/>
            <person name="Fraser C.M."/>
            <person name="Smith H.O."/>
            <person name="Venter J.C."/>
        </authorList>
    </citation>
    <scope>NUCLEOTIDE SEQUENCE [LARGE SCALE GENOMIC DNA]</scope>
    <source>
        <strain>ATCC 51907 / DSM 11121 / KW20 / Rd</strain>
    </source>
</reference>
<organism>
    <name type="scientific">Haemophilus influenzae (strain ATCC 51907 / DSM 11121 / KW20 / Rd)</name>
    <dbReference type="NCBI Taxonomy" id="71421"/>
    <lineage>
        <taxon>Bacteria</taxon>
        <taxon>Pseudomonadati</taxon>
        <taxon>Pseudomonadota</taxon>
        <taxon>Gammaproteobacteria</taxon>
        <taxon>Pasteurellales</taxon>
        <taxon>Pasteurellaceae</taxon>
        <taxon>Haemophilus</taxon>
    </lineage>
</organism>
<sequence length="282" mass="30293">MLDLLLEPFSYDYMLKAMILSTAVGGICAFLSSYLMLKGWSLIGDALSHSVVPGVAIAYAFALPYALGAFFAGILAALSILWIKSISKLKEDAVIGFIFSTFFALGLLIVSLNPTAVNVQNIILGNILGIADEDIYQVAIIIGVCLVLLLLFWKDLLLIFFDETQAITVGLSPLFYKILFFTLLSACVVAALQTVGAILVIAMVVTPGATAYLLTDKFKTLSIIAIILGAVTSFVGVYISYYLDGATGGVIVTLQTLLFLVAFLFSPKYGLLTRNKKAVENV</sequence>
<feature type="chain" id="PRO_0000171173" description="Probable iron transport system membrane protein HI_0360">
    <location>
        <begin position="1"/>
        <end position="282"/>
    </location>
</feature>
<feature type="transmembrane region" description="Helical" evidence="1">
    <location>
        <begin position="17"/>
        <end position="37"/>
    </location>
</feature>
<feature type="transmembrane region" description="Helical" evidence="1">
    <location>
        <begin position="63"/>
        <end position="83"/>
    </location>
</feature>
<feature type="transmembrane region" description="Helical" evidence="1">
    <location>
        <begin position="93"/>
        <end position="113"/>
    </location>
</feature>
<feature type="transmembrane region" description="Helical" evidence="1">
    <location>
        <begin position="140"/>
        <end position="160"/>
    </location>
</feature>
<feature type="transmembrane region" description="Helical" evidence="1">
    <location>
        <begin position="164"/>
        <end position="184"/>
    </location>
</feature>
<feature type="transmembrane region" description="Helical" evidence="1">
    <location>
        <begin position="186"/>
        <end position="206"/>
    </location>
</feature>
<feature type="transmembrane region" description="Helical" evidence="1">
    <location>
        <begin position="223"/>
        <end position="243"/>
    </location>
</feature>
<feature type="transmembrane region" description="Helical" evidence="1">
    <location>
        <begin position="245"/>
        <end position="265"/>
    </location>
</feature>
<name>Y360_HAEIN</name>
<protein>
    <recommendedName>
        <fullName>Probable iron transport system membrane protein HI_0360</fullName>
    </recommendedName>
</protein>
<evidence type="ECO:0000255" key="1"/>
<evidence type="ECO:0000305" key="2"/>
<keyword id="KW-0997">Cell inner membrane</keyword>
<keyword id="KW-1003">Cell membrane</keyword>
<keyword id="KW-0406">Ion transport</keyword>
<keyword id="KW-0408">Iron</keyword>
<keyword id="KW-0410">Iron transport</keyword>
<keyword id="KW-0472">Membrane</keyword>
<keyword id="KW-1185">Reference proteome</keyword>
<keyword id="KW-0812">Transmembrane</keyword>
<keyword id="KW-1133">Transmembrane helix</keyword>
<keyword id="KW-0813">Transport</keyword>
<gene>
    <name type="ordered locus">HI_0360</name>
</gene>
<comment type="function">
    <text evidence="2">Part of an ATP-driven transport system HI_0359/HI_0360/HI_0361/HI_0362 for iron.</text>
</comment>
<comment type="subcellular location">
    <subcellularLocation>
        <location evidence="2">Cell inner membrane</location>
        <topology evidence="2">Multi-pass membrane protein</topology>
    </subcellularLocation>
</comment>
<comment type="similarity">
    <text evidence="2">Belongs to the ABC-3 integral membrane protein family.</text>
</comment>
<dbReference type="EMBL" id="L42023">
    <property type="protein sequence ID" value="AAC22019.1"/>
    <property type="molecule type" value="Genomic_DNA"/>
</dbReference>
<dbReference type="PIR" id="E64063">
    <property type="entry name" value="E64063"/>
</dbReference>
<dbReference type="RefSeq" id="NP_438522.1">
    <property type="nucleotide sequence ID" value="NC_000907.1"/>
</dbReference>
<dbReference type="SMR" id="P44661"/>
<dbReference type="STRING" id="71421.HI_0360"/>
<dbReference type="EnsemblBacteria" id="AAC22019">
    <property type="protein sequence ID" value="AAC22019"/>
    <property type="gene ID" value="HI_0360"/>
</dbReference>
<dbReference type="KEGG" id="hin:HI_0360"/>
<dbReference type="PATRIC" id="fig|71421.8.peg.378"/>
<dbReference type="eggNOG" id="COG1108">
    <property type="taxonomic scope" value="Bacteria"/>
</dbReference>
<dbReference type="HOGENOM" id="CLU_028808_4_0_6"/>
<dbReference type="OrthoDB" id="9804300at2"/>
<dbReference type="PhylomeDB" id="P44661"/>
<dbReference type="BioCyc" id="HINF71421:G1GJ1-374-MONOMER"/>
<dbReference type="Proteomes" id="UP000000579">
    <property type="component" value="Chromosome"/>
</dbReference>
<dbReference type="GO" id="GO:0043190">
    <property type="term" value="C:ATP-binding cassette (ABC) transporter complex"/>
    <property type="evidence" value="ECO:0007669"/>
    <property type="project" value="InterPro"/>
</dbReference>
<dbReference type="GO" id="GO:0005886">
    <property type="term" value="C:plasma membrane"/>
    <property type="evidence" value="ECO:0000318"/>
    <property type="project" value="GO_Central"/>
</dbReference>
<dbReference type="GO" id="GO:0006826">
    <property type="term" value="P:iron ion transport"/>
    <property type="evidence" value="ECO:0007669"/>
    <property type="project" value="UniProtKB-KW"/>
</dbReference>
<dbReference type="GO" id="GO:0010043">
    <property type="term" value="P:response to zinc ion"/>
    <property type="evidence" value="ECO:0000318"/>
    <property type="project" value="GO_Central"/>
</dbReference>
<dbReference type="GO" id="GO:0055085">
    <property type="term" value="P:transmembrane transport"/>
    <property type="evidence" value="ECO:0007669"/>
    <property type="project" value="InterPro"/>
</dbReference>
<dbReference type="CDD" id="cd06550">
    <property type="entry name" value="TM_ABC_iron-siderophores_like"/>
    <property type="match status" value="1"/>
</dbReference>
<dbReference type="FunFam" id="1.10.3470.10:FF:000003">
    <property type="entry name" value="Iron ABC transporter permease SitD"/>
    <property type="match status" value="1"/>
</dbReference>
<dbReference type="Gene3D" id="1.10.3470.10">
    <property type="entry name" value="ABC transporter involved in vitamin B12 uptake, BtuC"/>
    <property type="match status" value="1"/>
</dbReference>
<dbReference type="InterPro" id="IPR037294">
    <property type="entry name" value="ABC_BtuC-like"/>
</dbReference>
<dbReference type="InterPro" id="IPR001626">
    <property type="entry name" value="ABC_TroCD"/>
</dbReference>
<dbReference type="PANTHER" id="PTHR30477">
    <property type="entry name" value="ABC-TRANSPORTER METAL-BINDING PROTEIN"/>
    <property type="match status" value="1"/>
</dbReference>
<dbReference type="PANTHER" id="PTHR30477:SF13">
    <property type="entry name" value="IRON TRANSPORT SYSTEM MEMBRANE PROTEIN HI_0360-RELATED"/>
    <property type="match status" value="1"/>
</dbReference>
<dbReference type="Pfam" id="PF00950">
    <property type="entry name" value="ABC-3"/>
    <property type="match status" value="1"/>
</dbReference>
<dbReference type="SUPFAM" id="SSF81345">
    <property type="entry name" value="ABC transporter involved in vitamin B12 uptake, BtuC"/>
    <property type="match status" value="1"/>
</dbReference>
<proteinExistence type="inferred from homology"/>